<geneLocation type="mitochondrion"/>
<gene>
    <name type="primary">MT-CYB</name>
    <name type="synonym">COB</name>
    <name type="synonym">CYTB</name>
    <name type="synonym">MTCYB</name>
</gene>
<reference key="1">
    <citation type="journal article" date="1983" name="Nucleic Acids Res.">
        <title>The nucleotide sequence of a segment of Trypanosoma brucei mitochondrial maxi-circle DNA that contains the gene for apocytochrome b and some unusual unassigned reading frames.</title>
        <authorList>
            <person name="Benne R."/>
            <person name="de Vries B.F."/>
            <person name="van den Burg J."/>
            <person name="Klaver B."/>
        </authorList>
    </citation>
    <scope>NUCLEOTIDE SEQUENCE [GENOMIC DNA] (KINETOPLAST)</scope>
</reference>
<name>CYB_TRYBB</name>
<protein>
    <recommendedName>
        <fullName>Cytochrome b</fullName>
    </recommendedName>
    <alternativeName>
        <fullName>Complex III subunit 3</fullName>
    </alternativeName>
    <alternativeName>
        <fullName>Complex III subunit III</fullName>
    </alternativeName>
    <alternativeName>
        <fullName>Cytochrome b-c1 complex subunit 3</fullName>
    </alternativeName>
    <alternativeName>
        <fullName>Ubiquinol-cytochrome-c reductase complex cytochrome b subunit</fullName>
    </alternativeName>
</protein>
<proteinExistence type="inferred from homology"/>
<organism>
    <name type="scientific">Trypanosoma brucei brucei</name>
    <dbReference type="NCBI Taxonomy" id="5702"/>
    <lineage>
        <taxon>Eukaryota</taxon>
        <taxon>Discoba</taxon>
        <taxon>Euglenozoa</taxon>
        <taxon>Kinetoplastea</taxon>
        <taxon>Metakinetoplastina</taxon>
        <taxon>Trypanosomatida</taxon>
        <taxon>Trypanosomatidae</taxon>
        <taxon>Trypanosoma</taxon>
    </lineage>
</organism>
<keyword id="KW-0249">Electron transport</keyword>
<keyword id="KW-0349">Heme</keyword>
<keyword id="KW-0408">Iron</keyword>
<keyword id="KW-0472">Membrane</keyword>
<keyword id="KW-0479">Metal-binding</keyword>
<keyword id="KW-0496">Mitochondrion</keyword>
<keyword id="KW-0999">Mitochondrion inner membrane</keyword>
<keyword id="KW-0679">Respiratory chain</keyword>
<keyword id="KW-0812">Transmembrane</keyword>
<keyword id="KW-1133">Transmembrane helix</keyword>
<keyword id="KW-0813">Transport</keyword>
<keyword id="KW-0830">Ubiquinone</keyword>
<comment type="function">
    <text evidence="3">Component of the ubiquinol-cytochrome c reductase complex (complex III or cytochrome b-c1 complex) that is part of the mitochondrial respiratory chain. The b-c1 complex mediates electron transfer from ubiquinol to cytochrome c. Contributes to the generation of a proton gradient across the mitochondrial membrane that is then used for ATP synthesis.</text>
</comment>
<comment type="cofactor">
    <cofactor evidence="3">
        <name>heme b</name>
        <dbReference type="ChEBI" id="CHEBI:60344"/>
    </cofactor>
    <text evidence="3">Binds 2 heme b groups non-covalently.</text>
</comment>
<comment type="subunit">
    <text evidence="1">The main subunits of complex b-c1 are: cytochrome b, cytochrome c1 and the Rieske protein.</text>
</comment>
<comment type="subcellular location">
    <subcellularLocation>
        <location evidence="3">Mitochondrion inner membrane</location>
        <topology evidence="3">Multi-pass membrane protein</topology>
    </subcellularLocation>
</comment>
<comment type="miscellaneous">
    <text evidence="1">Heme 1 (or BL or b562) is low-potential and absorbs at about 562 nm, and heme 2 (or BH or b566) is high-potential and absorbs at about 566 nm.</text>
</comment>
<comment type="similarity">
    <text evidence="5 6">Belongs to the cytochrome b family.</text>
</comment>
<comment type="caution">
    <text evidence="3">The protein contains an even number of transmembrane helices, fewer than predicted by bioinformatics tools.</text>
</comment>
<evidence type="ECO:0000250" key="1"/>
<evidence type="ECO:0000250" key="2">
    <source>
        <dbReference type="UniProtKB" id="P00157"/>
    </source>
</evidence>
<evidence type="ECO:0000250" key="3">
    <source>
        <dbReference type="UniProtKB" id="P00163"/>
    </source>
</evidence>
<evidence type="ECO:0000255" key="4"/>
<evidence type="ECO:0000255" key="5">
    <source>
        <dbReference type="PROSITE-ProRule" id="PRU00967"/>
    </source>
</evidence>
<evidence type="ECO:0000255" key="6">
    <source>
        <dbReference type="PROSITE-ProRule" id="PRU00968"/>
    </source>
</evidence>
<accession>P00164</accession>
<feature type="chain" id="PRO_0000061690" description="Cytochrome b">
    <location>
        <begin position="1"/>
        <end position="363"/>
    </location>
</feature>
<feature type="transmembrane region" description="Helical" evidence="3">
    <location>
        <begin position="24"/>
        <end position="44"/>
    </location>
</feature>
<feature type="transmembrane region" description="Helical" evidence="3">
    <location>
        <begin position="68"/>
        <end position="90"/>
    </location>
</feature>
<feature type="transmembrane region" description="Helical" evidence="3">
    <location>
        <begin position="105"/>
        <end position="125"/>
    </location>
</feature>
<feature type="transmembrane region" description="Helical" evidence="3">
    <location>
        <begin position="171"/>
        <end position="191"/>
    </location>
</feature>
<feature type="transmembrane region" description="Helical" evidence="3">
    <location>
        <begin position="219"/>
        <end position="239"/>
    </location>
</feature>
<feature type="transmembrane region" description="Helical" evidence="4">
    <location>
        <begin position="287"/>
        <end position="307"/>
    </location>
</feature>
<feature type="transmembrane region" description="Helical" evidence="4">
    <location>
        <begin position="321"/>
        <end position="341"/>
    </location>
</feature>
<feature type="transmembrane region" description="Helical" evidence="4">
    <location>
        <begin position="342"/>
        <end position="362"/>
    </location>
</feature>
<feature type="binding site" description="axial binding residue" evidence="3">
    <location>
        <position position="74"/>
    </location>
    <ligand>
        <name>heme b</name>
        <dbReference type="ChEBI" id="CHEBI:60344"/>
        <label>b562</label>
    </ligand>
    <ligandPart>
        <name>Fe</name>
        <dbReference type="ChEBI" id="CHEBI:18248"/>
    </ligandPart>
</feature>
<feature type="binding site" description="axial binding residue" evidence="3">
    <location>
        <position position="88"/>
    </location>
    <ligand>
        <name>heme b</name>
        <dbReference type="ChEBI" id="CHEBI:60344"/>
        <label>b566</label>
    </ligand>
    <ligandPart>
        <name>Fe</name>
        <dbReference type="ChEBI" id="CHEBI:18248"/>
    </ligandPart>
</feature>
<feature type="binding site" description="axial binding residue" evidence="3">
    <location>
        <position position="175"/>
    </location>
    <ligand>
        <name>heme b</name>
        <dbReference type="ChEBI" id="CHEBI:60344"/>
        <label>b562</label>
    </ligand>
    <ligandPart>
        <name>Fe</name>
        <dbReference type="ChEBI" id="CHEBI:18248"/>
    </ligandPart>
</feature>
<feature type="binding site" description="axial binding residue" evidence="3">
    <location>
        <position position="189"/>
    </location>
    <ligand>
        <name>heme b</name>
        <dbReference type="ChEBI" id="CHEBI:60344"/>
        <label>b566</label>
    </ligand>
    <ligandPart>
        <name>Fe</name>
        <dbReference type="ChEBI" id="CHEBI:18248"/>
    </ligandPart>
</feature>
<feature type="binding site" evidence="2">
    <location>
        <position position="194"/>
    </location>
    <ligand>
        <name>a ubiquinone</name>
        <dbReference type="ChEBI" id="CHEBI:16389"/>
    </ligand>
</feature>
<sequence length="363" mass="43455">MLYKSGEKRKGLLMSGCLYRIYGVGFSLGFFIALQIICGVCLAWLFFSCFICSNWYFVLFLWDFDLGFVIRSVHICFTSLLYLLLYIHIFKSITLIILFDTHILVWFIGFILFVFIIIIAFIGYVLPCTMMSYWGLTVFSNIIATVPILGIWLCYWIWGSEFINDFTLLKLHVLHVLLPFILLIILILHLFCLHYFMSSDAFCDRFAFYCERLSFCMWFYLRDMFLAFSILLCMMYVIFINWYFVFHEESWVIVDTLKTSDKILPEWFFLYLFGFLKAIPDKFMGLFLMVILLFSLFLFILNCILWFVYCRSSLLWLTYSLILFYSIWMSGFLALYVVLAYPIWMELQYWVLLLFLLIVCRLD</sequence>
<dbReference type="EMBL" id="X00017">
    <property type="protein sequence ID" value="CAA24915.1"/>
    <property type="molecule type" value="Genomic_DNA"/>
</dbReference>
<dbReference type="PIR" id="A00160">
    <property type="entry name" value="CBUTB"/>
</dbReference>
<dbReference type="SMR" id="P00164"/>
<dbReference type="GO" id="GO:0005743">
    <property type="term" value="C:mitochondrial inner membrane"/>
    <property type="evidence" value="ECO:0007669"/>
    <property type="project" value="UniProtKB-SubCell"/>
</dbReference>
<dbReference type="GO" id="GO:0046872">
    <property type="term" value="F:metal ion binding"/>
    <property type="evidence" value="ECO:0007669"/>
    <property type="project" value="UniProtKB-KW"/>
</dbReference>
<dbReference type="GO" id="GO:0008121">
    <property type="term" value="F:ubiquinol-cytochrome-c reductase activity"/>
    <property type="evidence" value="ECO:0007669"/>
    <property type="project" value="TreeGrafter"/>
</dbReference>
<dbReference type="GO" id="GO:0006122">
    <property type="term" value="P:mitochondrial electron transport, ubiquinol to cytochrome c"/>
    <property type="evidence" value="ECO:0007669"/>
    <property type="project" value="TreeGrafter"/>
</dbReference>
<dbReference type="CDD" id="cd00290">
    <property type="entry name" value="cytochrome_b_C"/>
    <property type="match status" value="1"/>
</dbReference>
<dbReference type="Gene3D" id="1.20.810.10">
    <property type="entry name" value="Cytochrome Bc1 Complex, Chain C"/>
    <property type="match status" value="1"/>
</dbReference>
<dbReference type="InterPro" id="IPR005798">
    <property type="entry name" value="Cyt_b/b6_C"/>
</dbReference>
<dbReference type="InterPro" id="IPR036150">
    <property type="entry name" value="Cyt_b/b6_C_sf"/>
</dbReference>
<dbReference type="InterPro" id="IPR005797">
    <property type="entry name" value="Cyt_b/b6_N"/>
</dbReference>
<dbReference type="InterPro" id="IPR027387">
    <property type="entry name" value="Cytb/b6-like_sf"/>
</dbReference>
<dbReference type="InterPro" id="IPR048260">
    <property type="entry name" value="Cytochrome_b_C_euk/bac"/>
</dbReference>
<dbReference type="InterPro" id="IPR016174">
    <property type="entry name" value="Di-haem_cyt_TM"/>
</dbReference>
<dbReference type="PANTHER" id="PTHR19271">
    <property type="entry name" value="CYTOCHROME B"/>
    <property type="match status" value="1"/>
</dbReference>
<dbReference type="PANTHER" id="PTHR19271:SF16">
    <property type="entry name" value="CYTOCHROME B"/>
    <property type="match status" value="1"/>
</dbReference>
<dbReference type="Pfam" id="PF00032">
    <property type="entry name" value="Cytochrom_B_C"/>
    <property type="match status" value="1"/>
</dbReference>
<dbReference type="Pfam" id="PF00033">
    <property type="entry name" value="Cytochrome_B"/>
    <property type="match status" value="1"/>
</dbReference>
<dbReference type="SUPFAM" id="SSF81648">
    <property type="entry name" value="a domain/subunit of cytochrome bc1 complex (Ubiquinol-cytochrome c reductase)"/>
    <property type="match status" value="1"/>
</dbReference>
<dbReference type="SUPFAM" id="SSF81342">
    <property type="entry name" value="Transmembrane di-heme cytochromes"/>
    <property type="match status" value="1"/>
</dbReference>
<dbReference type="PROSITE" id="PS51003">
    <property type="entry name" value="CYTB_CTER"/>
    <property type="match status" value="1"/>
</dbReference>
<dbReference type="PROSITE" id="PS51002">
    <property type="entry name" value="CYTB_NTER"/>
    <property type="match status" value="1"/>
</dbReference>